<reference key="1">
    <citation type="submission" date="2004-05" db="EMBL/GenBank/DDBJ databases">
        <authorList>
            <consortium name="NIH - Xenopus Gene Collection (XGC) project"/>
        </authorList>
    </citation>
    <scope>NUCLEOTIDE SEQUENCE [LARGE SCALE MRNA]</scope>
    <source>
        <tissue>Oocyte</tissue>
    </source>
</reference>
<evidence type="ECO:0000250" key="1"/>
<evidence type="ECO:0000255" key="2">
    <source>
        <dbReference type="PROSITE-ProRule" id="PRU00228"/>
    </source>
</evidence>
<evidence type="ECO:0000255" key="3">
    <source>
        <dbReference type="PROSITE-ProRule" id="PRU00624"/>
    </source>
</evidence>
<evidence type="ECO:0000256" key="4">
    <source>
        <dbReference type="SAM" id="MobiDB-lite"/>
    </source>
</evidence>
<evidence type="ECO:0000305" key="5"/>
<sequence length="420" mass="48445">MADLSKKYCVYCLADVTSLRLRCTECQDIELCTDCFSAGAEIGNHRRWHGYQLVDGGRFTLWGPEAEGGWTSREEQLLLDAIEQFGFGNWEDMAAHVGASRTPTEVMEHYVTMYIHGNLGKACIPDSIPNRVTDHTCPTGGPLSPSLTTPLPTLDLTVADQQQLGYMPLRDDYEIEFDQEAETLISGLSVNYDDDDVEVELKEAYVDMYVRKLKERQRRKSLARDYNLVPAFLGKDKKEKEKPAKRKISKEEKELRLKLRPLYQFMSNKEIEDCFENMHKERMLRAKIRELQRYRRNGITKTEESAEYEAARHKREKRKENKNIANSKRGREDGKESEFAAIENLAGFELLSDREKVLCSSLNLSPTRYLTVKTIIIKDHLQKRQGIPSKSRLPSYLDKVLKKRILNFLTESGWISRDAS</sequence>
<accession>Q6NRB5</accession>
<comment type="function">
    <text evidence="1">Transcriptional coactivator.</text>
</comment>
<comment type="subcellular location">
    <subcellularLocation>
        <location evidence="5">Nucleus</location>
    </subcellularLocation>
</comment>
<dbReference type="EMBL" id="BC070845">
    <property type="protein sequence ID" value="AAH70845.1"/>
    <property type="molecule type" value="mRNA"/>
</dbReference>
<dbReference type="RefSeq" id="NP_001084760.1">
    <property type="nucleotide sequence ID" value="NM_001091291.1"/>
</dbReference>
<dbReference type="SMR" id="Q6NRB5"/>
<dbReference type="BioGRID" id="101161">
    <property type="interactions" value="1"/>
</dbReference>
<dbReference type="DNASU" id="431795"/>
<dbReference type="GeneID" id="431795"/>
<dbReference type="KEGG" id="xla:431795"/>
<dbReference type="AGR" id="Xenbase:XB-GENE-991343"/>
<dbReference type="CTD" id="431795"/>
<dbReference type="Xenbase" id="XB-GENE-991343">
    <property type="gene designation" value="tada2b.L"/>
</dbReference>
<dbReference type="OMA" id="ISPACYI"/>
<dbReference type="OrthoDB" id="270417at2759"/>
<dbReference type="Proteomes" id="UP000186698">
    <property type="component" value="Chromosome 1L"/>
</dbReference>
<dbReference type="Bgee" id="431795">
    <property type="expression patterns" value="Expressed in oocyte and 17 other cell types or tissues"/>
</dbReference>
<dbReference type="GO" id="GO:0005634">
    <property type="term" value="C:nucleus"/>
    <property type="evidence" value="ECO:0000318"/>
    <property type="project" value="GO_Central"/>
</dbReference>
<dbReference type="GO" id="GO:0070461">
    <property type="term" value="C:SAGA-type complex"/>
    <property type="evidence" value="ECO:0000318"/>
    <property type="project" value="GO_Central"/>
</dbReference>
<dbReference type="GO" id="GO:0003682">
    <property type="term" value="F:chromatin binding"/>
    <property type="evidence" value="ECO:0000318"/>
    <property type="project" value="GO_Central"/>
</dbReference>
<dbReference type="GO" id="GO:0003713">
    <property type="term" value="F:transcription coactivator activity"/>
    <property type="evidence" value="ECO:0000318"/>
    <property type="project" value="GO_Central"/>
</dbReference>
<dbReference type="GO" id="GO:0008270">
    <property type="term" value="F:zinc ion binding"/>
    <property type="evidence" value="ECO:0007669"/>
    <property type="project" value="UniProtKB-KW"/>
</dbReference>
<dbReference type="GO" id="GO:0006338">
    <property type="term" value="P:chromatin remodeling"/>
    <property type="evidence" value="ECO:0000318"/>
    <property type="project" value="GO_Central"/>
</dbReference>
<dbReference type="GO" id="GO:0006357">
    <property type="term" value="P:regulation of transcription by RNA polymerase II"/>
    <property type="evidence" value="ECO:0000318"/>
    <property type="project" value="GO_Central"/>
</dbReference>
<dbReference type="CDD" id="cd00167">
    <property type="entry name" value="SANT"/>
    <property type="match status" value="1"/>
</dbReference>
<dbReference type="CDD" id="cd02335">
    <property type="entry name" value="ZZ_ADA2"/>
    <property type="match status" value="1"/>
</dbReference>
<dbReference type="FunFam" id="1.10.10.10:FF:000185">
    <property type="entry name" value="Transcriptional adapter"/>
    <property type="match status" value="1"/>
</dbReference>
<dbReference type="FunFam" id="1.10.10.60:FF:000170">
    <property type="entry name" value="Transcriptional adapter"/>
    <property type="match status" value="1"/>
</dbReference>
<dbReference type="FunFam" id="3.30.60.90:FF:000011">
    <property type="entry name" value="Transcriptional adapter"/>
    <property type="match status" value="1"/>
</dbReference>
<dbReference type="Gene3D" id="3.30.60.90">
    <property type="match status" value="1"/>
</dbReference>
<dbReference type="Gene3D" id="1.10.10.60">
    <property type="entry name" value="Homeodomain-like"/>
    <property type="match status" value="1"/>
</dbReference>
<dbReference type="Gene3D" id="1.10.10.10">
    <property type="entry name" value="Winged helix-like DNA-binding domain superfamily/Winged helix DNA-binding domain"/>
    <property type="match status" value="1"/>
</dbReference>
<dbReference type="InterPro" id="IPR041983">
    <property type="entry name" value="ADA2-like_ZZ"/>
</dbReference>
<dbReference type="InterPro" id="IPR016827">
    <property type="entry name" value="Ada2/TADA2"/>
</dbReference>
<dbReference type="InterPro" id="IPR056267">
    <property type="entry name" value="Ada2b_C"/>
</dbReference>
<dbReference type="InterPro" id="IPR009057">
    <property type="entry name" value="Homeodomain-like_sf"/>
</dbReference>
<dbReference type="InterPro" id="IPR001005">
    <property type="entry name" value="SANT/Myb"/>
</dbReference>
<dbReference type="InterPro" id="IPR017884">
    <property type="entry name" value="SANT_dom"/>
</dbReference>
<dbReference type="InterPro" id="IPR055141">
    <property type="entry name" value="TADA2A_B-like_dom"/>
</dbReference>
<dbReference type="InterPro" id="IPR036388">
    <property type="entry name" value="WH-like_DNA-bd_sf"/>
</dbReference>
<dbReference type="InterPro" id="IPR000433">
    <property type="entry name" value="Znf_ZZ"/>
</dbReference>
<dbReference type="InterPro" id="IPR043145">
    <property type="entry name" value="Znf_ZZ_sf"/>
</dbReference>
<dbReference type="PANTHER" id="PTHR12374:SF63">
    <property type="entry name" value="TRANSCRIPTIONAL ADAPTER 2-BETA"/>
    <property type="match status" value="1"/>
</dbReference>
<dbReference type="PANTHER" id="PTHR12374">
    <property type="entry name" value="TRANSCRIPTIONAL ADAPTOR 2 ADA2 -RELATED"/>
    <property type="match status" value="1"/>
</dbReference>
<dbReference type="Pfam" id="PF00249">
    <property type="entry name" value="Myb_DNA-binding"/>
    <property type="match status" value="1"/>
</dbReference>
<dbReference type="Pfam" id="PF22941">
    <property type="entry name" value="TADA2A-like_3rd"/>
    <property type="match status" value="1"/>
</dbReference>
<dbReference type="Pfam" id="PF24533">
    <property type="entry name" value="Tri-helical_Ada2b_C"/>
    <property type="match status" value="1"/>
</dbReference>
<dbReference type="Pfam" id="PF25299">
    <property type="entry name" value="ZZ_ADA2"/>
    <property type="match status" value="1"/>
</dbReference>
<dbReference type="PIRSF" id="PIRSF025024">
    <property type="entry name" value="Transcriptional_adaptor_2"/>
    <property type="match status" value="1"/>
</dbReference>
<dbReference type="SMART" id="SM00717">
    <property type="entry name" value="SANT"/>
    <property type="match status" value="1"/>
</dbReference>
<dbReference type="SUPFAM" id="SSF46689">
    <property type="entry name" value="Homeodomain-like"/>
    <property type="match status" value="2"/>
</dbReference>
<dbReference type="SUPFAM" id="SSF57850">
    <property type="entry name" value="RING/U-box"/>
    <property type="match status" value="1"/>
</dbReference>
<dbReference type="PROSITE" id="PS51293">
    <property type="entry name" value="SANT"/>
    <property type="match status" value="1"/>
</dbReference>
<dbReference type="PROSITE" id="PS01357">
    <property type="entry name" value="ZF_ZZ_1"/>
    <property type="match status" value="1"/>
</dbReference>
<dbReference type="PROSITE" id="PS50135">
    <property type="entry name" value="ZF_ZZ_2"/>
    <property type="match status" value="1"/>
</dbReference>
<feature type="chain" id="PRO_0000313714" description="Transcriptional adapter 2-beta">
    <location>
        <begin position="1"/>
        <end position="420"/>
    </location>
</feature>
<feature type="domain" description="SANT" evidence="3">
    <location>
        <begin position="65"/>
        <end position="118"/>
    </location>
</feature>
<feature type="zinc finger region" description="ZZ-type" evidence="2">
    <location>
        <begin position="4"/>
        <end position="59"/>
    </location>
</feature>
<feature type="region of interest" description="Disordered" evidence="4">
    <location>
        <begin position="303"/>
        <end position="333"/>
    </location>
</feature>
<feature type="binding site" evidence="2">
    <location>
        <position position="9"/>
    </location>
    <ligand>
        <name>Zn(2+)</name>
        <dbReference type="ChEBI" id="CHEBI:29105"/>
        <label>1</label>
    </ligand>
</feature>
<feature type="binding site" evidence="2">
    <location>
        <position position="12"/>
    </location>
    <ligand>
        <name>Zn(2+)</name>
        <dbReference type="ChEBI" id="CHEBI:29105"/>
        <label>1</label>
    </ligand>
</feature>
<feature type="binding site" evidence="2">
    <location>
        <position position="23"/>
    </location>
    <ligand>
        <name>Zn(2+)</name>
        <dbReference type="ChEBI" id="CHEBI:29105"/>
        <label>2</label>
    </ligand>
</feature>
<feature type="binding site" evidence="2">
    <location>
        <position position="26"/>
    </location>
    <ligand>
        <name>Zn(2+)</name>
        <dbReference type="ChEBI" id="CHEBI:29105"/>
        <label>2</label>
    </ligand>
</feature>
<feature type="binding site" evidence="2">
    <location>
        <position position="32"/>
    </location>
    <ligand>
        <name>Zn(2+)</name>
        <dbReference type="ChEBI" id="CHEBI:29105"/>
        <label>1</label>
    </ligand>
</feature>
<feature type="binding site" evidence="2">
    <location>
        <position position="35"/>
    </location>
    <ligand>
        <name>Zn(2+)</name>
        <dbReference type="ChEBI" id="CHEBI:29105"/>
        <label>1</label>
    </ligand>
</feature>
<feature type="binding site" evidence="2">
    <location>
        <position position="45"/>
    </location>
    <ligand>
        <name>Zn(2+)</name>
        <dbReference type="ChEBI" id="CHEBI:29105"/>
        <label>2</label>
    </ligand>
</feature>
<feature type="binding site" evidence="2">
    <location>
        <position position="49"/>
    </location>
    <ligand>
        <name>Zn(2+)</name>
        <dbReference type="ChEBI" id="CHEBI:29105"/>
        <label>2</label>
    </ligand>
</feature>
<gene>
    <name type="primary">tada2b</name>
</gene>
<proteinExistence type="evidence at transcript level"/>
<name>TAD2B_XENLA</name>
<protein>
    <recommendedName>
        <fullName>Transcriptional adapter 2-beta</fullName>
    </recommendedName>
</protein>
<organism>
    <name type="scientific">Xenopus laevis</name>
    <name type="common">African clawed frog</name>
    <dbReference type="NCBI Taxonomy" id="8355"/>
    <lineage>
        <taxon>Eukaryota</taxon>
        <taxon>Metazoa</taxon>
        <taxon>Chordata</taxon>
        <taxon>Craniata</taxon>
        <taxon>Vertebrata</taxon>
        <taxon>Euteleostomi</taxon>
        <taxon>Amphibia</taxon>
        <taxon>Batrachia</taxon>
        <taxon>Anura</taxon>
        <taxon>Pipoidea</taxon>
        <taxon>Pipidae</taxon>
        <taxon>Xenopodinae</taxon>
        <taxon>Xenopus</taxon>
        <taxon>Xenopus</taxon>
    </lineage>
</organism>
<keyword id="KW-0479">Metal-binding</keyword>
<keyword id="KW-0539">Nucleus</keyword>
<keyword id="KW-1185">Reference proteome</keyword>
<keyword id="KW-0804">Transcription</keyword>
<keyword id="KW-0805">Transcription regulation</keyword>
<keyword id="KW-0862">Zinc</keyword>
<keyword id="KW-0863">Zinc-finger</keyword>